<proteinExistence type="inferred from homology"/>
<comment type="function">
    <text evidence="3">Odorant receptor.</text>
</comment>
<comment type="subcellular location">
    <subcellularLocation>
        <location>Cell membrane</location>
        <topology>Multi-pass membrane protein</topology>
    </subcellularLocation>
</comment>
<comment type="polymorphism">
    <text>A single nucleotide deletion at position Met-205 in the gene coding for this protein is responsible for functional diversity thus producing a pseudogene.</text>
</comment>
<comment type="similarity">
    <text evidence="2">Belongs to the G-protein coupled receptor 1 family.</text>
</comment>
<comment type="sequence caution" evidence="3">
    <conflict type="erroneous initiation">
        <sequence resource="EMBL-CDS" id="DAA04756"/>
    </conflict>
</comment>
<comment type="online information" name="Human Olfactory Receptor Data Exploratorium (HORDE)">
    <link uri="http://genome.weizmann.ac.il/horde/card/index/symbol:OR4K3P"/>
</comment>
<keyword id="KW-1003">Cell membrane</keyword>
<keyword id="KW-1015">Disulfide bond</keyword>
<keyword id="KW-0297">G-protein coupled receptor</keyword>
<keyword id="KW-0325">Glycoprotein</keyword>
<keyword id="KW-0472">Membrane</keyword>
<keyword id="KW-0552">Olfaction</keyword>
<keyword id="KW-0675">Receptor</keyword>
<keyword id="KW-1185">Reference proteome</keyword>
<keyword id="KW-0716">Sensory transduction</keyword>
<keyword id="KW-0807">Transducer</keyword>
<keyword id="KW-0812">Transmembrane</keyword>
<keyword id="KW-1133">Transmembrane helix</keyword>
<dbReference type="EMBL" id="AC024399">
    <property type="status" value="NOT_ANNOTATED_CDS"/>
    <property type="molecule type" value="Genomic_DNA"/>
</dbReference>
<dbReference type="EMBL" id="AF399571">
    <property type="protein sequence ID" value="AAK95056.1"/>
    <property type="molecule type" value="Genomic_DNA"/>
</dbReference>
<dbReference type="EMBL" id="BK004358">
    <property type="protein sequence ID" value="DAA04756.1"/>
    <property type="status" value="ALT_INIT"/>
    <property type="molecule type" value="Genomic_DNA"/>
</dbReference>
<dbReference type="RefSeq" id="NP_001335195.2">
    <property type="nucleotide sequence ID" value="NM_001348266.2"/>
</dbReference>
<dbReference type="SMR" id="Q96R72"/>
<dbReference type="FunCoup" id="Q96R72">
    <property type="interactions" value="12"/>
</dbReference>
<dbReference type="IntAct" id="Q96R72">
    <property type="interactions" value="2"/>
</dbReference>
<dbReference type="GlyCosmos" id="Q96R72">
    <property type="glycosylation" value="1 site, No reported glycans"/>
</dbReference>
<dbReference type="GlyGen" id="Q96R72">
    <property type="glycosylation" value="1 site"/>
</dbReference>
<dbReference type="iPTMnet" id="Q96R72"/>
<dbReference type="PhosphoSitePlus" id="Q96R72"/>
<dbReference type="BioMuta" id="OR4K3"/>
<dbReference type="DMDM" id="166215048"/>
<dbReference type="jPOST" id="Q96R72"/>
<dbReference type="MassIVE" id="Q96R72"/>
<dbReference type="PeptideAtlas" id="Q96R72"/>
<dbReference type="ProteomicsDB" id="77934"/>
<dbReference type="GeneID" id="283617"/>
<dbReference type="AGR" id="HGNC:14731"/>
<dbReference type="GeneCards" id="OR4K3"/>
<dbReference type="HGNC" id="HGNC:14731">
    <property type="gene designation" value="OR4K3"/>
</dbReference>
<dbReference type="neXtProt" id="NX_Q96R72"/>
<dbReference type="PharmGKB" id="PA32318"/>
<dbReference type="InParanoid" id="Q96R72"/>
<dbReference type="OrthoDB" id="9517882at2759"/>
<dbReference type="PAN-GO" id="Q96R72">
    <property type="GO annotations" value="2 GO annotations based on evolutionary models"/>
</dbReference>
<dbReference type="PhylomeDB" id="Q96R72"/>
<dbReference type="PathwayCommons" id="Q96R72"/>
<dbReference type="Reactome" id="R-HSA-9752946">
    <property type="pathway name" value="Expression and translocation of olfactory receptors"/>
</dbReference>
<dbReference type="SignaLink" id="Q96R72"/>
<dbReference type="Pharos" id="Q96R72">
    <property type="development level" value="Tdark"/>
</dbReference>
<dbReference type="PRO" id="PR:Q96R72"/>
<dbReference type="Proteomes" id="UP000005640">
    <property type="component" value="Unplaced"/>
</dbReference>
<dbReference type="RNAct" id="Q96R72">
    <property type="molecule type" value="protein"/>
</dbReference>
<dbReference type="GO" id="GO:0005886">
    <property type="term" value="C:plasma membrane"/>
    <property type="evidence" value="ECO:0007669"/>
    <property type="project" value="UniProtKB-SubCell"/>
</dbReference>
<dbReference type="GO" id="GO:0004930">
    <property type="term" value="F:G protein-coupled receptor activity"/>
    <property type="evidence" value="ECO:0007669"/>
    <property type="project" value="UniProtKB-KW"/>
</dbReference>
<dbReference type="GO" id="GO:0004984">
    <property type="term" value="F:olfactory receptor activity"/>
    <property type="evidence" value="ECO:0000318"/>
    <property type="project" value="GO_Central"/>
</dbReference>
<dbReference type="CDD" id="cd15226">
    <property type="entry name" value="7tmA_OR4-like"/>
    <property type="match status" value="1"/>
</dbReference>
<dbReference type="FunFam" id="1.20.1070.10:FF:000012">
    <property type="entry name" value="Olfactory receptor"/>
    <property type="match status" value="1"/>
</dbReference>
<dbReference type="Gene3D" id="1.20.1070.10">
    <property type="entry name" value="Rhodopsin 7-helix transmembrane proteins"/>
    <property type="match status" value="1"/>
</dbReference>
<dbReference type="InterPro" id="IPR000276">
    <property type="entry name" value="GPCR_Rhodpsn"/>
</dbReference>
<dbReference type="InterPro" id="IPR017452">
    <property type="entry name" value="GPCR_Rhodpsn_7TM"/>
</dbReference>
<dbReference type="InterPro" id="IPR000725">
    <property type="entry name" value="Olfact_rcpt"/>
</dbReference>
<dbReference type="InterPro" id="IPR050427">
    <property type="entry name" value="Olfactory_Receptors"/>
</dbReference>
<dbReference type="PANTHER" id="PTHR48002">
    <property type="entry name" value="OLFACTORY RECEPTOR"/>
    <property type="match status" value="1"/>
</dbReference>
<dbReference type="Pfam" id="PF13853">
    <property type="entry name" value="7tm_4"/>
    <property type="match status" value="1"/>
</dbReference>
<dbReference type="PRINTS" id="PR00237">
    <property type="entry name" value="GPCRRHODOPSN"/>
</dbReference>
<dbReference type="PRINTS" id="PR00245">
    <property type="entry name" value="OLFACTORYR"/>
</dbReference>
<dbReference type="SUPFAM" id="SSF81321">
    <property type="entry name" value="Family A G protein-coupled receptor-like"/>
    <property type="match status" value="1"/>
</dbReference>
<dbReference type="PROSITE" id="PS00237">
    <property type="entry name" value="G_PROTEIN_RECEP_F1_1"/>
    <property type="match status" value="1"/>
</dbReference>
<dbReference type="PROSITE" id="PS50262">
    <property type="entry name" value="G_PROTEIN_RECEP_F1_2"/>
    <property type="match status" value="1"/>
</dbReference>
<sequence length="315" mass="35408">MAWSNQSAVTEFILRGLSSSLELQIFYFLFFSIVYAATVLGNLLIVVTIASEPHLHSPMYFLLGNLSFIDMSLASFATPKMIADFLREHKAISFEGCMTQMFFLHLLGGAEIVLLISMSFDRYVAICKPLHYLTIMSRRMCVGLVILSWIVGIFHALSQLAFTVNLPFCGPNEVDSFFCDLPLVIKLACVDTYILGVFMISTSGMIALVCFILLVISYTIILVTVRQRSSGGSSKALSTCSAHFTVVTLFFGPCTFIYVWPFTNFPIDKVLSVFYTIYTPLLNPVIYTVRNKDVKYSMRKLSSHIFKSRKTDHTP</sequence>
<name>OR4K3_HUMAN</name>
<reference key="1">
    <citation type="journal article" date="2003" name="Nature">
        <title>The DNA sequence and analysis of human chromosome 14.</title>
        <authorList>
            <person name="Heilig R."/>
            <person name="Eckenberg R."/>
            <person name="Petit J.-L."/>
            <person name="Fonknechten N."/>
            <person name="Da Silva C."/>
            <person name="Cattolico L."/>
            <person name="Levy M."/>
            <person name="Barbe V."/>
            <person name="De Berardinis V."/>
            <person name="Ureta-Vidal A."/>
            <person name="Pelletier E."/>
            <person name="Vico V."/>
            <person name="Anthouard V."/>
            <person name="Rowen L."/>
            <person name="Madan A."/>
            <person name="Qin S."/>
            <person name="Sun H."/>
            <person name="Du H."/>
            <person name="Pepin K."/>
            <person name="Artiguenave F."/>
            <person name="Robert C."/>
            <person name="Cruaud C."/>
            <person name="Bruels T."/>
            <person name="Jaillon O."/>
            <person name="Friedlander L."/>
            <person name="Samson G."/>
            <person name="Brottier P."/>
            <person name="Cure S."/>
            <person name="Segurens B."/>
            <person name="Aniere F."/>
            <person name="Samain S."/>
            <person name="Crespeau H."/>
            <person name="Abbasi N."/>
            <person name="Aiach N."/>
            <person name="Boscus D."/>
            <person name="Dickhoff R."/>
            <person name="Dors M."/>
            <person name="Dubois I."/>
            <person name="Friedman C."/>
            <person name="Gouyvenoux M."/>
            <person name="James R."/>
            <person name="Madan A."/>
            <person name="Mairey-Estrada B."/>
            <person name="Mangenot S."/>
            <person name="Martins N."/>
            <person name="Menard M."/>
            <person name="Oztas S."/>
            <person name="Ratcliffe A."/>
            <person name="Shaffer T."/>
            <person name="Trask B."/>
            <person name="Vacherie B."/>
            <person name="Bellemere C."/>
            <person name="Belser C."/>
            <person name="Besnard-Gonnet M."/>
            <person name="Bartol-Mavel D."/>
            <person name="Boutard M."/>
            <person name="Briez-Silla S."/>
            <person name="Combette S."/>
            <person name="Dufosse-Laurent V."/>
            <person name="Ferron C."/>
            <person name="Lechaplais C."/>
            <person name="Louesse C."/>
            <person name="Muselet D."/>
            <person name="Magdelenat G."/>
            <person name="Pateau E."/>
            <person name="Petit E."/>
            <person name="Sirvain-Trukniewicz P."/>
            <person name="Trybou A."/>
            <person name="Vega-Czarny N."/>
            <person name="Bataille E."/>
            <person name="Bluet E."/>
            <person name="Bordelais I."/>
            <person name="Dubois M."/>
            <person name="Dumont C."/>
            <person name="Guerin T."/>
            <person name="Haffray S."/>
            <person name="Hammadi R."/>
            <person name="Muanga J."/>
            <person name="Pellouin V."/>
            <person name="Robert D."/>
            <person name="Wunderle E."/>
            <person name="Gauguet G."/>
            <person name="Roy A."/>
            <person name="Sainte-Marthe L."/>
            <person name="Verdier J."/>
            <person name="Verdier-Discala C."/>
            <person name="Hillier L.W."/>
            <person name="Fulton L."/>
            <person name="McPherson J."/>
            <person name="Matsuda F."/>
            <person name="Wilson R."/>
            <person name="Scarpelli C."/>
            <person name="Gyapay G."/>
            <person name="Wincker P."/>
            <person name="Saurin W."/>
            <person name="Quetier F."/>
            <person name="Waterston R."/>
            <person name="Hood L."/>
            <person name="Weissenbach J."/>
        </authorList>
    </citation>
    <scope>NUCLEOTIDE SEQUENCE [LARGE SCALE GENOMIC DNA]</scope>
</reference>
<reference key="2">
    <citation type="journal article" date="2002" name="Genomics">
        <title>DEFOG: a practical scheme for deciphering families of genes.</title>
        <authorList>
            <person name="Fuchs T."/>
            <person name="Malecova B."/>
            <person name="Linhart C."/>
            <person name="Sharan R."/>
            <person name="Khen M."/>
            <person name="Herwig R."/>
            <person name="Shmulevich D."/>
            <person name="Elkon R."/>
            <person name="Steinfath M."/>
            <person name="O'Brien J.K."/>
            <person name="Radelof U."/>
            <person name="Lehrach H."/>
            <person name="Lancet D."/>
            <person name="Shamir R."/>
        </authorList>
    </citation>
    <scope>NUCLEOTIDE SEQUENCE [GENOMIC DNA] OF 68-281</scope>
</reference>
<reference key="3">
    <citation type="journal article" date="2004" name="Proc. Natl. Acad. Sci. U.S.A.">
        <title>The human olfactory receptor gene family.</title>
        <authorList>
            <person name="Malnic B."/>
            <person name="Godfrey P.A."/>
            <person name="Buck L.B."/>
        </authorList>
    </citation>
    <scope>IDENTIFICATION</scope>
</reference>
<reference key="4">
    <citation type="journal article" date="2004" name="Proc. Natl. Acad. Sci. U.S.A.">
        <authorList>
            <person name="Malnic B."/>
            <person name="Godfrey P.A."/>
            <person name="Buck L.B."/>
        </authorList>
    </citation>
    <scope>ERRATUM OF PUBMED:14983052</scope>
</reference>
<reference key="5">
    <citation type="journal article" date="2003" name="Nat. Genet.">
        <title>Different noses for different people.</title>
        <authorList>
            <person name="Menashe I."/>
            <person name="Man O."/>
            <person name="Lancet D."/>
            <person name="Gilad Y."/>
        </authorList>
    </citation>
    <scope>POLYMORPHISM</scope>
</reference>
<gene>
    <name type="primary">OR4K3</name>
    <name type="synonym">OR4K3P</name>
</gene>
<feature type="chain" id="PRO_0000150554" description="Olfactory receptor 4K3">
    <location>
        <begin position="1"/>
        <end position="315"/>
    </location>
</feature>
<feature type="topological domain" description="Extracellular" evidence="1">
    <location>
        <begin position="1"/>
        <end position="25"/>
    </location>
</feature>
<feature type="transmembrane region" description="Helical; Name=1" evidence="1">
    <location>
        <begin position="26"/>
        <end position="49"/>
    </location>
</feature>
<feature type="topological domain" description="Cytoplasmic" evidence="1">
    <location>
        <begin position="50"/>
        <end position="57"/>
    </location>
</feature>
<feature type="transmembrane region" description="Helical; Name=2" evidence="1">
    <location>
        <begin position="58"/>
        <end position="79"/>
    </location>
</feature>
<feature type="topological domain" description="Extracellular" evidence="1">
    <location>
        <begin position="80"/>
        <end position="100"/>
    </location>
</feature>
<feature type="transmembrane region" description="Helical; Name=3" evidence="1">
    <location>
        <begin position="101"/>
        <end position="120"/>
    </location>
</feature>
<feature type="topological domain" description="Cytoplasmic" evidence="1">
    <location>
        <begin position="121"/>
        <end position="139"/>
    </location>
</feature>
<feature type="transmembrane region" description="Helical; Name=4" evidence="1">
    <location>
        <begin position="140"/>
        <end position="158"/>
    </location>
</feature>
<feature type="topological domain" description="Extracellular" evidence="1">
    <location>
        <begin position="159"/>
        <end position="195"/>
    </location>
</feature>
<feature type="transmembrane region" description="Helical; Name=5" evidence="1">
    <location>
        <begin position="196"/>
        <end position="219"/>
    </location>
</feature>
<feature type="topological domain" description="Cytoplasmic" evidence="1">
    <location>
        <begin position="220"/>
        <end position="235"/>
    </location>
</feature>
<feature type="transmembrane region" description="Helical; Name=6" evidence="1">
    <location>
        <begin position="236"/>
        <end position="258"/>
    </location>
</feature>
<feature type="topological domain" description="Extracellular" evidence="1">
    <location>
        <begin position="259"/>
        <end position="269"/>
    </location>
</feature>
<feature type="transmembrane region" description="Helical; Name=7" evidence="1">
    <location>
        <begin position="270"/>
        <end position="289"/>
    </location>
</feature>
<feature type="topological domain" description="Cytoplasmic" evidence="1">
    <location>
        <begin position="290"/>
        <end position="315"/>
    </location>
</feature>
<feature type="glycosylation site" description="N-linked (GlcNAc...) asparagine" evidence="1">
    <location>
        <position position="5"/>
    </location>
</feature>
<feature type="disulfide bond" evidence="2">
    <location>
        <begin position="97"/>
        <end position="189"/>
    </location>
</feature>
<feature type="sequence conflict" description="In Ref. 1; AC024399." evidence="3" ref="1">
    <original>M</original>
    <variation>T</variation>
    <location>
        <position position="59"/>
    </location>
</feature>
<organism>
    <name type="scientific">Homo sapiens</name>
    <name type="common">Human</name>
    <dbReference type="NCBI Taxonomy" id="9606"/>
    <lineage>
        <taxon>Eukaryota</taxon>
        <taxon>Metazoa</taxon>
        <taxon>Chordata</taxon>
        <taxon>Craniata</taxon>
        <taxon>Vertebrata</taxon>
        <taxon>Euteleostomi</taxon>
        <taxon>Mammalia</taxon>
        <taxon>Eutheria</taxon>
        <taxon>Euarchontoglires</taxon>
        <taxon>Primates</taxon>
        <taxon>Haplorrhini</taxon>
        <taxon>Catarrhini</taxon>
        <taxon>Hominidae</taxon>
        <taxon>Homo</taxon>
    </lineage>
</organism>
<protein>
    <recommendedName>
        <fullName>Olfactory receptor 4K3</fullName>
    </recommendedName>
    <alternativeName>
        <fullName>Olfactory receptor OR14-14</fullName>
    </alternativeName>
</protein>
<accession>Q96R72</accession>
<accession>Q6IFA4</accession>
<evidence type="ECO:0000255" key="1"/>
<evidence type="ECO:0000255" key="2">
    <source>
        <dbReference type="PROSITE-ProRule" id="PRU00521"/>
    </source>
</evidence>
<evidence type="ECO:0000305" key="3"/>